<organism>
    <name type="scientific">Oceanobacillus iheyensis (strain DSM 14371 / CIP 107618 / JCM 11309 / KCTC 3954 / HTE831)</name>
    <dbReference type="NCBI Taxonomy" id="221109"/>
    <lineage>
        <taxon>Bacteria</taxon>
        <taxon>Bacillati</taxon>
        <taxon>Bacillota</taxon>
        <taxon>Bacilli</taxon>
        <taxon>Bacillales</taxon>
        <taxon>Bacillaceae</taxon>
        <taxon>Oceanobacillus</taxon>
    </lineage>
</organism>
<keyword id="KW-0067">ATP-binding</keyword>
<keyword id="KW-0418">Kinase</keyword>
<keyword id="KW-0460">Magnesium</keyword>
<keyword id="KW-0479">Metal-binding</keyword>
<keyword id="KW-0547">Nucleotide-binding</keyword>
<keyword id="KW-1185">Reference proteome</keyword>
<keyword id="KW-0784">Thiamine biosynthesis</keyword>
<keyword id="KW-0808">Transferase</keyword>
<protein>
    <recommendedName>
        <fullName evidence="1">Hydroxyethylthiazole kinase 2</fullName>
        <ecNumber evidence="1">2.7.1.50</ecNumber>
    </recommendedName>
    <alternativeName>
        <fullName evidence="1">4-methyl-5-beta-hydroxyethylthiazole kinase 2</fullName>
        <shortName evidence="1">TH kinase 2</shortName>
        <shortName evidence="1">Thz kinase 2</shortName>
    </alternativeName>
</protein>
<name>THIM2_OCEIH</name>
<proteinExistence type="inferred from homology"/>
<gene>
    <name evidence="1" type="primary">thiM2</name>
    <name type="ordered locus">OB0643</name>
</gene>
<feature type="chain" id="PRO_0000156947" description="Hydroxyethylthiazole kinase 2">
    <location>
        <begin position="1"/>
        <end position="260"/>
    </location>
</feature>
<feature type="binding site" evidence="1">
    <location>
        <position position="40"/>
    </location>
    <ligand>
        <name>substrate</name>
    </ligand>
</feature>
<feature type="binding site" evidence="1">
    <location>
        <position position="116"/>
    </location>
    <ligand>
        <name>ATP</name>
        <dbReference type="ChEBI" id="CHEBI:30616"/>
    </ligand>
</feature>
<feature type="binding site" evidence="1">
    <location>
        <position position="161"/>
    </location>
    <ligand>
        <name>ATP</name>
        <dbReference type="ChEBI" id="CHEBI:30616"/>
    </ligand>
</feature>
<feature type="binding site" evidence="1">
    <location>
        <position position="188"/>
    </location>
    <ligand>
        <name>substrate</name>
    </ligand>
</feature>
<comment type="function">
    <text evidence="1">Catalyzes the phosphorylation of the hydroxyl group of 4-methyl-5-beta-hydroxyethylthiazole (THZ).</text>
</comment>
<comment type="catalytic activity">
    <reaction evidence="1">
        <text>5-(2-hydroxyethyl)-4-methylthiazole + ATP = 4-methyl-5-(2-phosphooxyethyl)-thiazole + ADP + H(+)</text>
        <dbReference type="Rhea" id="RHEA:24212"/>
        <dbReference type="ChEBI" id="CHEBI:15378"/>
        <dbReference type="ChEBI" id="CHEBI:17957"/>
        <dbReference type="ChEBI" id="CHEBI:30616"/>
        <dbReference type="ChEBI" id="CHEBI:58296"/>
        <dbReference type="ChEBI" id="CHEBI:456216"/>
        <dbReference type="EC" id="2.7.1.50"/>
    </reaction>
</comment>
<comment type="cofactor">
    <cofactor evidence="1">
        <name>Mg(2+)</name>
        <dbReference type="ChEBI" id="CHEBI:18420"/>
    </cofactor>
</comment>
<comment type="pathway">
    <text evidence="1">Cofactor biosynthesis; thiamine diphosphate biosynthesis; 4-methyl-5-(2-phosphoethyl)-thiazole from 5-(2-hydroxyethyl)-4-methylthiazole: step 1/1.</text>
</comment>
<comment type="similarity">
    <text evidence="1">Belongs to the Thz kinase family.</text>
</comment>
<reference key="1">
    <citation type="journal article" date="2002" name="Nucleic Acids Res.">
        <title>Genome sequence of Oceanobacillus iheyensis isolated from the Iheya Ridge and its unexpected adaptive capabilities to extreme environments.</title>
        <authorList>
            <person name="Takami H."/>
            <person name="Takaki Y."/>
            <person name="Uchiyama I."/>
        </authorList>
    </citation>
    <scope>NUCLEOTIDE SEQUENCE [LARGE SCALE GENOMIC DNA]</scope>
    <source>
        <strain>DSM 14371 / CIP 107618 / JCM 11309 / KCTC 3954 / HTE831</strain>
    </source>
</reference>
<evidence type="ECO:0000255" key="1">
    <source>
        <dbReference type="HAMAP-Rule" id="MF_00228"/>
    </source>
</evidence>
<dbReference type="EC" id="2.7.1.50" evidence="1"/>
<dbReference type="EMBL" id="BA000028">
    <property type="protein sequence ID" value="BAC12599.1"/>
    <property type="molecule type" value="Genomic_DNA"/>
</dbReference>
<dbReference type="SMR" id="Q8ESJ1"/>
<dbReference type="STRING" id="221109.gene:10732861"/>
<dbReference type="KEGG" id="oih:OB0643"/>
<dbReference type="eggNOG" id="COG2145">
    <property type="taxonomic scope" value="Bacteria"/>
</dbReference>
<dbReference type="HOGENOM" id="CLU_019943_0_1_9"/>
<dbReference type="OrthoDB" id="9778146at2"/>
<dbReference type="PhylomeDB" id="Q8ESJ1"/>
<dbReference type="UniPathway" id="UPA00060">
    <property type="reaction ID" value="UER00139"/>
</dbReference>
<dbReference type="Proteomes" id="UP000000822">
    <property type="component" value="Chromosome"/>
</dbReference>
<dbReference type="GO" id="GO:0005524">
    <property type="term" value="F:ATP binding"/>
    <property type="evidence" value="ECO:0007669"/>
    <property type="project" value="UniProtKB-UniRule"/>
</dbReference>
<dbReference type="GO" id="GO:0004417">
    <property type="term" value="F:hydroxyethylthiazole kinase activity"/>
    <property type="evidence" value="ECO:0007669"/>
    <property type="project" value="UniProtKB-UniRule"/>
</dbReference>
<dbReference type="GO" id="GO:0000287">
    <property type="term" value="F:magnesium ion binding"/>
    <property type="evidence" value="ECO:0007669"/>
    <property type="project" value="UniProtKB-UniRule"/>
</dbReference>
<dbReference type="GO" id="GO:0009228">
    <property type="term" value="P:thiamine biosynthetic process"/>
    <property type="evidence" value="ECO:0007669"/>
    <property type="project" value="UniProtKB-KW"/>
</dbReference>
<dbReference type="GO" id="GO:0009229">
    <property type="term" value="P:thiamine diphosphate biosynthetic process"/>
    <property type="evidence" value="ECO:0007669"/>
    <property type="project" value="UniProtKB-UniRule"/>
</dbReference>
<dbReference type="CDD" id="cd01170">
    <property type="entry name" value="THZ_kinase"/>
    <property type="match status" value="1"/>
</dbReference>
<dbReference type="Gene3D" id="3.40.1190.20">
    <property type="match status" value="1"/>
</dbReference>
<dbReference type="HAMAP" id="MF_00228">
    <property type="entry name" value="Thz_kinase"/>
    <property type="match status" value="1"/>
</dbReference>
<dbReference type="InterPro" id="IPR000417">
    <property type="entry name" value="Hyethyz_kinase"/>
</dbReference>
<dbReference type="InterPro" id="IPR029056">
    <property type="entry name" value="Ribokinase-like"/>
</dbReference>
<dbReference type="NCBIfam" id="NF006830">
    <property type="entry name" value="PRK09355.1"/>
    <property type="match status" value="1"/>
</dbReference>
<dbReference type="NCBIfam" id="TIGR00694">
    <property type="entry name" value="thiM"/>
    <property type="match status" value="1"/>
</dbReference>
<dbReference type="Pfam" id="PF02110">
    <property type="entry name" value="HK"/>
    <property type="match status" value="1"/>
</dbReference>
<dbReference type="PIRSF" id="PIRSF000513">
    <property type="entry name" value="Thz_kinase"/>
    <property type="match status" value="1"/>
</dbReference>
<dbReference type="PRINTS" id="PR01099">
    <property type="entry name" value="HYETHTZKNASE"/>
</dbReference>
<dbReference type="SUPFAM" id="SSF53613">
    <property type="entry name" value="Ribokinase-like"/>
    <property type="match status" value="1"/>
</dbReference>
<accession>Q8ESJ1</accession>
<sequence length="260" mass="27636">MVDAIAKIKQDKPFIFNITNEVASNFSANGLIAIGASPAMSHTPREAKKYGEIADAVVLNLGTLTEDRGEAMLKAGMAANKNGVPVILDPIAVGGTDFRTEIIDDILKTVKLAAIRANAGEIAVLAGKLEKAKGPDSIIQENEPEIAKTVAKKYDTVVISTGKVDVVTDGKRTALCTNGHEMLQNITASGCLLSSFVGPFVSVVDDFYQAGIYAVTSYGIAAELAMEKASGPGTFIPALLDEIYFLTDEKVEKYKQVHEL</sequence>